<evidence type="ECO:0000250" key="1">
    <source>
        <dbReference type="UniProtKB" id="P34981"/>
    </source>
</evidence>
<evidence type="ECO:0000255" key="2"/>
<evidence type="ECO:0000255" key="3">
    <source>
        <dbReference type="PROSITE-ProRule" id="PRU00521"/>
    </source>
</evidence>
<reference key="1">
    <citation type="journal article" date="1998" name="J. Vet. Med. Sci.">
        <title>Molecular cloning of bovine thyrotropin-releasing hormone receptor gene.</title>
        <authorList>
            <person name="Takata M."/>
            <person name="Shimada Y."/>
            <person name="Ikeda A."/>
            <person name="Sekikawa K."/>
        </authorList>
    </citation>
    <scope>NUCLEOTIDE SEQUENCE [GENOMIC DNA]</scope>
    <source>
        <strain>Holstein</strain>
    </source>
</reference>
<name>TRHR_BOVIN</name>
<protein>
    <recommendedName>
        <fullName>Thyrotropin-releasing hormone receptor</fullName>
        <shortName>TRH-R</shortName>
    </recommendedName>
    <alternativeName>
        <fullName>Thyroliberin receptor</fullName>
    </alternativeName>
</protein>
<gene>
    <name type="primary">TRHR</name>
</gene>
<sequence length="398" mass="45165">MENETGSELNQTQLQPRAVVALEYQVVTILLVLIICGLGIVGNIMVVLVVMRTKHMRTPTNCYLVSLAVADLMVLVAAGLPNITDSIYGSWVYGYVGCLCITYLQYLGINASSCSITAFTIERYIAICHPIKAQFLCTFSRAKKIIIFVWAFTSIYCMLWFFLLDLNISTYKDAIVVSCGYKISRNYYSPIYLMDFGVFYVVPMILATVLYGFIARILFLNPIPSDPKENSNMWKNDSTHQNKNLNSKTSNRYFNSTVSSRKQVTKMLAVVVILFALLWMPYRTLVVVNSFLSSPFQENWFLLFCRICIYLNSAINPVIYNLMSQKFRAAFRKLCNCKQKPVEKPANYSVALSYSVIKESDRFSTELDDVTVTDTYLSATKVSFDDTCLASEITFNQS</sequence>
<organism>
    <name type="scientific">Bos taurus</name>
    <name type="common">Bovine</name>
    <dbReference type="NCBI Taxonomy" id="9913"/>
    <lineage>
        <taxon>Eukaryota</taxon>
        <taxon>Metazoa</taxon>
        <taxon>Chordata</taxon>
        <taxon>Craniata</taxon>
        <taxon>Vertebrata</taxon>
        <taxon>Euteleostomi</taxon>
        <taxon>Mammalia</taxon>
        <taxon>Eutheria</taxon>
        <taxon>Laurasiatheria</taxon>
        <taxon>Artiodactyla</taxon>
        <taxon>Ruminantia</taxon>
        <taxon>Pecora</taxon>
        <taxon>Bovidae</taxon>
        <taxon>Bovinae</taxon>
        <taxon>Bos</taxon>
    </lineage>
</organism>
<feature type="chain" id="PRO_0000070186" description="Thyrotropin-releasing hormone receptor">
    <location>
        <begin position="1"/>
        <end position="398"/>
    </location>
</feature>
<feature type="topological domain" description="Extracellular" evidence="2">
    <location>
        <begin position="1"/>
        <end position="28"/>
    </location>
</feature>
<feature type="transmembrane region" description="Helical; Name=1" evidence="2">
    <location>
        <begin position="29"/>
        <end position="51"/>
    </location>
</feature>
<feature type="topological domain" description="Cytoplasmic" evidence="2">
    <location>
        <begin position="52"/>
        <end position="61"/>
    </location>
</feature>
<feature type="transmembrane region" description="Helical; Name=2" evidence="2">
    <location>
        <begin position="62"/>
        <end position="83"/>
    </location>
</feature>
<feature type="topological domain" description="Extracellular" evidence="2">
    <location>
        <begin position="84"/>
        <end position="99"/>
    </location>
</feature>
<feature type="transmembrane region" description="Helical; Name=3" evidence="2">
    <location>
        <begin position="100"/>
        <end position="121"/>
    </location>
</feature>
<feature type="topological domain" description="Cytoplasmic" evidence="2">
    <location>
        <begin position="122"/>
        <end position="144"/>
    </location>
</feature>
<feature type="transmembrane region" description="Helical; Name=4" evidence="2">
    <location>
        <begin position="145"/>
        <end position="168"/>
    </location>
</feature>
<feature type="topological domain" description="Extracellular" evidence="2">
    <location>
        <begin position="169"/>
        <end position="193"/>
    </location>
</feature>
<feature type="transmembrane region" description="Helical; Name=5" evidence="2">
    <location>
        <begin position="194"/>
        <end position="215"/>
    </location>
</feature>
<feature type="topological domain" description="Cytoplasmic" evidence="2">
    <location>
        <begin position="216"/>
        <end position="266"/>
    </location>
</feature>
<feature type="transmembrane region" description="Helical; Name=6" evidence="2">
    <location>
        <begin position="267"/>
        <end position="288"/>
    </location>
</feature>
<feature type="topological domain" description="Extracellular" evidence="2">
    <location>
        <begin position="289"/>
        <end position="296"/>
    </location>
</feature>
<feature type="transmembrane region" description="Helical; Name=7" evidence="2">
    <location>
        <begin position="297"/>
        <end position="319"/>
    </location>
</feature>
<feature type="topological domain" description="Cytoplasmic" evidence="2">
    <location>
        <begin position="320"/>
        <end position="398"/>
    </location>
</feature>
<feature type="glycosylation site" description="N-linked (GlcNAc...) asparagine" evidence="2">
    <location>
        <position position="3"/>
    </location>
</feature>
<feature type="glycosylation site" description="N-linked (GlcNAc...) asparagine" evidence="2">
    <location>
        <position position="10"/>
    </location>
</feature>
<feature type="disulfide bond" evidence="3">
    <location>
        <begin position="98"/>
        <end position="179"/>
    </location>
</feature>
<accession>O46639</accession>
<proteinExistence type="inferred from homology"/>
<dbReference type="EMBL" id="D83964">
    <property type="protein sequence ID" value="BAA24069.1"/>
    <property type="molecule type" value="Genomic_DNA"/>
</dbReference>
<dbReference type="RefSeq" id="NP_776628.1">
    <property type="nucleotide sequence ID" value="NM_174203.1"/>
</dbReference>
<dbReference type="RefSeq" id="XP_015329974.1">
    <property type="nucleotide sequence ID" value="XM_015474488.3"/>
</dbReference>
<dbReference type="SMR" id="O46639"/>
<dbReference type="FunCoup" id="O46639">
    <property type="interactions" value="121"/>
</dbReference>
<dbReference type="STRING" id="9913.ENSBTAP00000026634"/>
<dbReference type="GlyCosmos" id="O46639">
    <property type="glycosylation" value="2 sites, No reported glycans"/>
</dbReference>
<dbReference type="GlyGen" id="O46639">
    <property type="glycosylation" value="2 sites"/>
</dbReference>
<dbReference type="PaxDb" id="9913-ENSBTAP00000026634"/>
<dbReference type="Ensembl" id="ENSBTAT00000026634.3">
    <property type="protein sequence ID" value="ENSBTAP00000026634.1"/>
    <property type="gene ID" value="ENSBTAG00000019997.3"/>
</dbReference>
<dbReference type="GeneID" id="281549"/>
<dbReference type="KEGG" id="bta:281549"/>
<dbReference type="CTD" id="7201"/>
<dbReference type="VEuPathDB" id="HostDB:ENSBTAG00000019997"/>
<dbReference type="VGNC" id="VGNC:36306">
    <property type="gene designation" value="TRHR"/>
</dbReference>
<dbReference type="eggNOG" id="KOG3656">
    <property type="taxonomic scope" value="Eukaryota"/>
</dbReference>
<dbReference type="GeneTree" id="ENSGT01120000271846"/>
<dbReference type="HOGENOM" id="CLU_009579_6_5_1"/>
<dbReference type="InParanoid" id="O46639"/>
<dbReference type="OMA" id="NCKQKPA"/>
<dbReference type="OrthoDB" id="10036964at2759"/>
<dbReference type="TreeFam" id="TF326170"/>
<dbReference type="Reactome" id="R-BTA-375276">
    <property type="pathway name" value="Peptide ligand-binding receptors"/>
</dbReference>
<dbReference type="Reactome" id="R-BTA-416476">
    <property type="pathway name" value="G alpha (q) signalling events"/>
</dbReference>
<dbReference type="Proteomes" id="UP000009136">
    <property type="component" value="Chromosome 14"/>
</dbReference>
<dbReference type="Bgee" id="ENSBTAG00000019997">
    <property type="expression patterns" value="Expressed in pituitary gland and 13 other cell types or tissues"/>
</dbReference>
<dbReference type="GO" id="GO:0005886">
    <property type="term" value="C:plasma membrane"/>
    <property type="evidence" value="ECO:0007669"/>
    <property type="project" value="UniProtKB-SubCell"/>
</dbReference>
<dbReference type="GO" id="GO:0004997">
    <property type="term" value="F:thyrotropin-releasing hormone receptor activity"/>
    <property type="evidence" value="ECO:0000318"/>
    <property type="project" value="GO_Central"/>
</dbReference>
<dbReference type="GO" id="GO:0007200">
    <property type="term" value="P:phospholipase C-activating G protein-coupled receptor signaling pathway"/>
    <property type="evidence" value="ECO:0000318"/>
    <property type="project" value="GO_Central"/>
</dbReference>
<dbReference type="CDD" id="cd14995">
    <property type="entry name" value="7tmA_TRH-R"/>
    <property type="match status" value="1"/>
</dbReference>
<dbReference type="FunFam" id="1.20.1070.10:FF:000186">
    <property type="entry name" value="thyrotropin-releasing hormone receptor"/>
    <property type="match status" value="1"/>
</dbReference>
<dbReference type="Gene3D" id="1.20.1070.10">
    <property type="entry name" value="Rhodopsin 7-helix transmembrane proteins"/>
    <property type="match status" value="1"/>
</dbReference>
<dbReference type="InterPro" id="IPR000276">
    <property type="entry name" value="GPCR_Rhodpsn"/>
</dbReference>
<dbReference type="InterPro" id="IPR017452">
    <property type="entry name" value="GPCR_Rhodpsn_7TM"/>
</dbReference>
<dbReference type="InterPro" id="IPR002120">
    <property type="entry name" value="TRH_rcpt_1"/>
</dbReference>
<dbReference type="PANTHER" id="PTHR46061">
    <property type="entry name" value="THYROTROPIN-RELEASING HORMONE RECEPTOR"/>
    <property type="match status" value="1"/>
</dbReference>
<dbReference type="PANTHER" id="PTHR46061:SF2">
    <property type="entry name" value="THYROTROPIN-RELEASING HORMONE RECEPTOR"/>
    <property type="match status" value="1"/>
</dbReference>
<dbReference type="Pfam" id="PF00001">
    <property type="entry name" value="7tm_1"/>
    <property type="match status" value="1"/>
</dbReference>
<dbReference type="PRINTS" id="PR00237">
    <property type="entry name" value="GPCRRHODOPSN"/>
</dbReference>
<dbReference type="PRINTS" id="PR00751">
    <property type="entry name" value="THYROLIBRINR"/>
</dbReference>
<dbReference type="PRINTS" id="PR01846">
    <property type="entry name" value="TRHRFAMILY"/>
</dbReference>
<dbReference type="SMART" id="SM01381">
    <property type="entry name" value="7TM_GPCR_Srsx"/>
    <property type="match status" value="1"/>
</dbReference>
<dbReference type="SUPFAM" id="SSF81321">
    <property type="entry name" value="Family A G protein-coupled receptor-like"/>
    <property type="match status" value="1"/>
</dbReference>
<dbReference type="PROSITE" id="PS00237">
    <property type="entry name" value="G_PROTEIN_RECEP_F1_1"/>
    <property type="match status" value="1"/>
</dbReference>
<dbReference type="PROSITE" id="PS50262">
    <property type="entry name" value="G_PROTEIN_RECEP_F1_2"/>
    <property type="match status" value="1"/>
</dbReference>
<comment type="function">
    <text evidence="1">Receptor for thyrotropin-releasing hormone (TRH). Upon ligand binding, this G-protein-coupled receptor triggers activation of the phosphatidylinositol (IP3)-calcium-protein kinase C (PKC) pathway.</text>
</comment>
<comment type="subcellular location">
    <subcellularLocation>
        <location evidence="1">Cell membrane</location>
        <topology evidence="2">Multi-pass membrane protein</topology>
    </subcellularLocation>
</comment>
<comment type="similarity">
    <text evidence="3">Belongs to the G-protein coupled receptor 1 family.</text>
</comment>
<keyword id="KW-1003">Cell membrane</keyword>
<keyword id="KW-1015">Disulfide bond</keyword>
<keyword id="KW-0297">G-protein coupled receptor</keyword>
<keyword id="KW-0325">Glycoprotein</keyword>
<keyword id="KW-0472">Membrane</keyword>
<keyword id="KW-0675">Receptor</keyword>
<keyword id="KW-1185">Reference proteome</keyword>
<keyword id="KW-0807">Transducer</keyword>
<keyword id="KW-0812">Transmembrane</keyword>
<keyword id="KW-1133">Transmembrane helix</keyword>